<organism>
    <name type="scientific">Methanobrevibacter ruminantium (strain ATCC 35063 / DSM 1093 / JCM 13430 / OCM 146 / M1)</name>
    <name type="common">Methanobacterium ruminantium</name>
    <dbReference type="NCBI Taxonomy" id="634498"/>
    <lineage>
        <taxon>Archaea</taxon>
        <taxon>Methanobacteriati</taxon>
        <taxon>Methanobacteriota</taxon>
        <taxon>Methanomada group</taxon>
        <taxon>Methanobacteria</taxon>
        <taxon>Methanobacteriales</taxon>
        <taxon>Methanobacteriaceae</taxon>
        <taxon>Methanobrevibacter</taxon>
    </lineage>
</organism>
<gene>
    <name evidence="1" type="primary">cas1-1</name>
    <name type="ordered locus">mru_0798</name>
</gene>
<dbReference type="EMBL" id="CP001719">
    <property type="protein sequence ID" value="ADC46649.1"/>
    <property type="molecule type" value="Genomic_DNA"/>
</dbReference>
<dbReference type="RefSeq" id="WP_012955600.1">
    <property type="nucleotide sequence ID" value="NC_013790.1"/>
</dbReference>
<dbReference type="SMR" id="D3E288"/>
<dbReference type="STRING" id="634498.mru_0798"/>
<dbReference type="GeneID" id="8770447"/>
<dbReference type="KEGG" id="mru:mru_0798"/>
<dbReference type="PATRIC" id="fig|634498.28.peg.799"/>
<dbReference type="eggNOG" id="arCOG01452">
    <property type="taxonomic scope" value="Archaea"/>
</dbReference>
<dbReference type="HOGENOM" id="CLU_052779_2_0_2"/>
<dbReference type="OrthoDB" id="2216at2157"/>
<dbReference type="Proteomes" id="UP000008680">
    <property type="component" value="Chromosome"/>
</dbReference>
<dbReference type="GO" id="GO:0003677">
    <property type="term" value="F:DNA binding"/>
    <property type="evidence" value="ECO:0007669"/>
    <property type="project" value="UniProtKB-KW"/>
</dbReference>
<dbReference type="GO" id="GO:0004520">
    <property type="term" value="F:DNA endonuclease activity"/>
    <property type="evidence" value="ECO:0007669"/>
    <property type="project" value="InterPro"/>
</dbReference>
<dbReference type="GO" id="GO:0046872">
    <property type="term" value="F:metal ion binding"/>
    <property type="evidence" value="ECO:0007669"/>
    <property type="project" value="UniProtKB-UniRule"/>
</dbReference>
<dbReference type="GO" id="GO:0051607">
    <property type="term" value="P:defense response to virus"/>
    <property type="evidence" value="ECO:0007669"/>
    <property type="project" value="UniProtKB-UniRule"/>
</dbReference>
<dbReference type="GO" id="GO:0043571">
    <property type="term" value="P:maintenance of CRISPR repeat elements"/>
    <property type="evidence" value="ECO:0007669"/>
    <property type="project" value="UniProtKB-UniRule"/>
</dbReference>
<dbReference type="CDD" id="cd09722">
    <property type="entry name" value="Cas1_I-B"/>
    <property type="match status" value="1"/>
</dbReference>
<dbReference type="Gene3D" id="1.20.120.920">
    <property type="entry name" value="CRISPR-associated endonuclease Cas1, C-terminal domain"/>
    <property type="match status" value="1"/>
</dbReference>
<dbReference type="Gene3D" id="3.100.10.20">
    <property type="entry name" value="CRISPR-associated endonuclease Cas1, N-terminal domain"/>
    <property type="match status" value="1"/>
</dbReference>
<dbReference type="HAMAP" id="MF_01470">
    <property type="entry name" value="Cas1"/>
    <property type="match status" value="1"/>
</dbReference>
<dbReference type="InterPro" id="IPR002729">
    <property type="entry name" value="CRISPR-assoc_Cas1"/>
</dbReference>
<dbReference type="InterPro" id="IPR042206">
    <property type="entry name" value="CRISPR-assoc_Cas1_C"/>
</dbReference>
<dbReference type="InterPro" id="IPR019858">
    <property type="entry name" value="CRISPR-assoc_Cas1_HMARI/TNEAP"/>
</dbReference>
<dbReference type="InterPro" id="IPR042211">
    <property type="entry name" value="CRISPR-assoc_Cas1_N"/>
</dbReference>
<dbReference type="NCBIfam" id="TIGR00287">
    <property type="entry name" value="cas1"/>
    <property type="match status" value="1"/>
</dbReference>
<dbReference type="NCBIfam" id="TIGR03641">
    <property type="entry name" value="cas1_HMARI"/>
    <property type="match status" value="1"/>
</dbReference>
<dbReference type="PANTHER" id="PTHR43219">
    <property type="entry name" value="CRISPR-ASSOCIATED ENDONUCLEASE CAS1"/>
    <property type="match status" value="1"/>
</dbReference>
<dbReference type="PANTHER" id="PTHR43219:SF2">
    <property type="entry name" value="CRISPR-ASSOCIATED ENDONUCLEASE CAS1"/>
    <property type="match status" value="1"/>
</dbReference>
<dbReference type="Pfam" id="PF01867">
    <property type="entry name" value="Cas_Cas1"/>
    <property type="match status" value="1"/>
</dbReference>
<keyword id="KW-0051">Antiviral defense</keyword>
<keyword id="KW-0238">DNA-binding</keyword>
<keyword id="KW-0255">Endonuclease</keyword>
<keyword id="KW-0378">Hydrolase</keyword>
<keyword id="KW-0460">Magnesium</keyword>
<keyword id="KW-0464">Manganese</keyword>
<keyword id="KW-0479">Metal-binding</keyword>
<keyword id="KW-0540">Nuclease</keyword>
<protein>
    <recommendedName>
        <fullName>CRISPR-associated protein Cas1 1</fullName>
    </recommendedName>
</protein>
<evidence type="ECO:0000255" key="1">
    <source>
        <dbReference type="HAMAP-Rule" id="MF_01470"/>
    </source>
</evidence>
<sequence length="322" mass="37880">MSKKNYYLLSEGILKRKENTIYFVNEKGSKPLPINKIYSMYAYGQITISSQVISLFAKEGIPIHFFNYYGYYNGSFYPRESLLSGDLLIKQAEHNIDFSKRLKLAKLFVEGAAKNILKVLAYYKIENNIKNTLTELNESSKITEVMNVEGRIRAEYYQYFDDILPDEFKMEGRSRQPPTNMINSLISFGNSMMYASVITELYNTQLNPTISYLHEPAERRFSLALDLSEIFKPIIVDRVIFYLVNKKMITEKDFNQDLNCCLLNDKGRATFVKEYNKRLETTIKHKDLGRKVSYQRLIRLEAYKLKKHVFGMKEYDPFVIWW</sequence>
<proteinExistence type="inferred from homology"/>
<feature type="chain" id="PRO_0000417097" description="CRISPR-associated protein Cas1 1">
    <location>
        <begin position="1"/>
        <end position="322"/>
    </location>
</feature>
<feature type="binding site" evidence="1">
    <location>
        <position position="149"/>
    </location>
    <ligand>
        <name>Mn(2+)</name>
        <dbReference type="ChEBI" id="CHEBI:29035"/>
    </ligand>
</feature>
<feature type="binding site" evidence="1">
    <location>
        <position position="214"/>
    </location>
    <ligand>
        <name>Mn(2+)</name>
        <dbReference type="ChEBI" id="CHEBI:29035"/>
    </ligand>
</feature>
<feature type="binding site" evidence="1">
    <location>
        <position position="229"/>
    </location>
    <ligand>
        <name>Mn(2+)</name>
        <dbReference type="ChEBI" id="CHEBI:29035"/>
    </ligand>
</feature>
<reference key="1">
    <citation type="journal article" date="2010" name="PLoS ONE">
        <title>The genome sequence of the rumen methanogen Methanobrevibacter ruminantium reveals new possibilities for controlling ruminant methane emissions.</title>
        <authorList>
            <person name="Leahy S.C."/>
            <person name="Kelly W.J."/>
            <person name="Altermann E."/>
            <person name="Ronimus R.S."/>
            <person name="Yeoman C.J."/>
            <person name="Pacheco D.M."/>
            <person name="Li D."/>
            <person name="Kong Z."/>
            <person name="McTavish S."/>
            <person name="Sang C."/>
            <person name="Lambie S.C."/>
            <person name="Janssen P.H."/>
            <person name="Dey D."/>
            <person name="Attwood G.T."/>
        </authorList>
    </citation>
    <scope>NUCLEOTIDE SEQUENCE [LARGE SCALE GENOMIC DNA]</scope>
    <source>
        <strain>ATCC 35063 / DSM 1093 / JCM 13430 / OCM 146 / M1</strain>
    </source>
</reference>
<name>CAS1A_METRM</name>
<accession>D3E288</accession>
<comment type="function">
    <text evidence="1">CRISPR (clustered regularly interspaced short palindromic repeat), is an adaptive immune system that provides protection against mobile genetic elements (viruses, transposable elements and conjugative plasmids). CRISPR clusters contain spacers, sequences complementary to antecedent mobile elements, and target invading nucleic acids. CRISPR clusters are transcribed and processed into CRISPR RNA (crRNA). Acts as a dsDNA endonuclease. Involved in the integration of spacer DNA into the CRISPR cassette.</text>
</comment>
<comment type="cofactor">
    <cofactor evidence="1">
        <name>Mg(2+)</name>
        <dbReference type="ChEBI" id="CHEBI:18420"/>
    </cofactor>
    <cofactor evidence="1">
        <name>Mn(2+)</name>
        <dbReference type="ChEBI" id="CHEBI:29035"/>
    </cofactor>
</comment>
<comment type="subunit">
    <text evidence="1">Homodimer, forms a heterotetramer with a Cas2 homodimer.</text>
</comment>
<comment type="similarity">
    <text evidence="1">Belongs to the CRISPR-associated endonuclease Cas1 family.</text>
</comment>